<proteinExistence type="evidence at protein level"/>
<gene>
    <name type="primary">FIP2</name>
    <name type="ordered locus">At5g55000</name>
    <name type="ORF">MBG8.27</name>
</gene>
<keyword id="KW-0025">Alternative splicing</keyword>
<keyword id="KW-1185">Reference proteome</keyword>
<keyword id="KW-0677">Repeat</keyword>
<keyword id="KW-0833">Ubl conjugation pathway</keyword>
<feature type="chain" id="PRO_0000405333" description="FH protein interacting protein FIP2">
    <location>
        <begin position="1"/>
        <end position="298"/>
    </location>
</feature>
<feature type="domain" description="BTB">
    <location>
        <begin position="9"/>
        <end position="80"/>
    </location>
</feature>
<feature type="domain" description="Pentapeptide repeat 1">
    <location>
        <begin position="129"/>
        <end position="165"/>
    </location>
</feature>
<feature type="domain" description="Pentapeptide repeat 2">
    <location>
        <begin position="166"/>
        <end position="203"/>
    </location>
</feature>
<feature type="domain" description="Pentapeptide repeat 3">
    <location>
        <begin position="216"/>
        <end position="255"/>
    </location>
</feature>
<feature type="domain" description="Pentapeptide repeat 4">
    <location>
        <begin position="256"/>
        <end position="295"/>
    </location>
</feature>
<sequence>METSSNLSSMVRLNIGGKKFCTTIDTLTIREPDSMLAAMFSGRHAMCQESKKGYVFIDRDGKHFRHILNWLRDGVIPSLSDPDCSELLREADYYQLLGLKDGIKDSRKEVGEVEAELTRIDIIKCIQTERVRFRGVNLSGIDLSKLDLSLVDFSYACLRNVFFSRTNLQCAKFRNADAEGSIFHNAILRECEFTSANLRGALLAGTNLQSANLQDACLVGCSFCGADLRTAHLQNADLTNANLEGANLEGANLKGAKLSNANFKGANLQRAYLRHVNLREAHMEGANLGGANMTGAIR</sequence>
<protein>
    <recommendedName>
        <fullName>FH protein interacting protein FIP2</fullName>
    </recommendedName>
    <alternativeName>
        <fullName>BTB/POZ domain-containing protein At5g55000</fullName>
    </alternativeName>
</protein>
<reference key="1">
    <citation type="journal article" date="2000" name="Plant Cell Physiol.">
        <title>Characterization of the Arabidopsis formin-like protein AFH1 and its interacting protein.</title>
        <authorList>
            <person name="Banno H."/>
            <person name="Chua N.-H."/>
        </authorList>
    </citation>
    <scope>NUCLEOTIDE SEQUENCE [MRNA]</scope>
    <scope>TISSUE SPECIFICITY</scope>
    <scope>INTERACTION WITH FH1</scope>
    <source>
        <strain>cv. Landsberg erecta</strain>
    </source>
</reference>
<reference key="2">
    <citation type="journal article" date="1999" name="DNA Res.">
        <title>Structural analysis of Arabidopsis thaliana chromosome 5. IX. Sequence features of the regions of 1,011,550 bp covered by seventeen P1 and TAC clones.</title>
        <authorList>
            <person name="Kaneko T."/>
            <person name="Katoh T."/>
            <person name="Sato S."/>
            <person name="Nakamura Y."/>
            <person name="Asamizu E."/>
            <person name="Kotani H."/>
            <person name="Miyajima N."/>
            <person name="Tabata S."/>
        </authorList>
    </citation>
    <scope>NUCLEOTIDE SEQUENCE [LARGE SCALE GENOMIC DNA]</scope>
    <source>
        <strain>cv. Columbia</strain>
    </source>
</reference>
<reference key="3">
    <citation type="journal article" date="1997" name="DNA Res.">
        <title>Structural analysis of Arabidopsis thaliana chromosome 5. I. Sequence features of the 1.6 Mb regions covered by twenty physically assigned P1 clones.</title>
        <authorList>
            <person name="Sato S."/>
            <person name="Kotani H."/>
            <person name="Nakamura Y."/>
            <person name="Kaneko T."/>
            <person name="Asamizu E."/>
            <person name="Fukami M."/>
            <person name="Miyajima N."/>
            <person name="Tabata S."/>
        </authorList>
    </citation>
    <scope>NUCLEOTIDE SEQUENCE [LARGE SCALE GENOMIC DNA]</scope>
    <source>
        <strain>cv. Columbia</strain>
    </source>
</reference>
<reference key="4">
    <citation type="journal article" date="2017" name="Plant J.">
        <title>Araport11: a complete reannotation of the Arabidopsis thaliana reference genome.</title>
        <authorList>
            <person name="Cheng C.Y."/>
            <person name="Krishnakumar V."/>
            <person name="Chan A.P."/>
            <person name="Thibaud-Nissen F."/>
            <person name="Schobel S."/>
            <person name="Town C.D."/>
        </authorList>
    </citation>
    <scope>GENOME REANNOTATION</scope>
    <source>
        <strain>cv. Columbia</strain>
    </source>
</reference>
<reference key="5">
    <citation type="submission" date="2007-01" db="EMBL/GenBank/DDBJ databases">
        <title>Arabidopsis ORF clones.</title>
        <authorList>
            <person name="Kim C.J."/>
            <person name="Bautista V.R."/>
            <person name="Chen H."/>
            <person name="De Los Reyes C."/>
            <person name="Wu S.Y."/>
            <person name="Ecker J.R."/>
        </authorList>
    </citation>
    <scope>NUCLEOTIDE SEQUENCE [LARGE SCALE MRNA]</scope>
    <source>
        <strain>cv. Columbia</strain>
    </source>
</reference>
<reference key="6">
    <citation type="journal article" date="2005" name="J. Biol. Chem.">
        <title>Cullins 3a and 3b assemble with members of the broad complex/tramtrack/bric-a-brac (BTB) protein family to form essential ubiquitin-protein ligases (E3s) in Arabidopsis.</title>
        <authorList>
            <person name="Gingerich D.J."/>
            <person name="Gagne J.M."/>
            <person name="Salter D.W."/>
            <person name="Hellmann H."/>
            <person name="Estelle M."/>
            <person name="Ma L."/>
            <person name="Vierstra R.D."/>
        </authorList>
    </citation>
    <scope>DOMAIN BTB</scope>
</reference>
<accession>Q9SE95</accession>
<name>FIP2_ARATH</name>
<evidence type="ECO:0000250" key="1"/>
<evidence type="ECO:0000269" key="2">
    <source>
    </source>
</evidence>
<evidence type="ECO:0000269" key="3">
    <source>
    </source>
</evidence>
<dbReference type="EMBL" id="AF174429">
    <property type="protein sequence ID" value="AAF14550.1"/>
    <property type="molecule type" value="mRNA"/>
</dbReference>
<dbReference type="EMBL" id="AB017059">
    <property type="protein sequence ID" value="BAB10574.1"/>
    <property type="molecule type" value="Genomic_DNA"/>
</dbReference>
<dbReference type="EMBL" id="AB005232">
    <property type="protein sequence ID" value="BAB10574.1"/>
    <property type="status" value="JOINED"/>
    <property type="molecule type" value="Genomic_DNA"/>
</dbReference>
<dbReference type="EMBL" id="CP002688">
    <property type="protein sequence ID" value="AED96567.1"/>
    <property type="molecule type" value="Genomic_DNA"/>
</dbReference>
<dbReference type="EMBL" id="BT030093">
    <property type="protein sequence ID" value="ABN04831.1"/>
    <property type="molecule type" value="mRNA"/>
</dbReference>
<dbReference type="RefSeq" id="NP_200311.1">
    <molecule id="Q9SE95-1"/>
    <property type="nucleotide sequence ID" value="NM_124882.4"/>
</dbReference>
<dbReference type="SMR" id="Q9SE95"/>
<dbReference type="BioGRID" id="20835">
    <property type="interactions" value="1"/>
</dbReference>
<dbReference type="FunCoup" id="Q9SE95">
    <property type="interactions" value="909"/>
</dbReference>
<dbReference type="STRING" id="3702.Q9SE95"/>
<dbReference type="iPTMnet" id="Q9SE95"/>
<dbReference type="PaxDb" id="3702-AT5G55000.2"/>
<dbReference type="ProteomicsDB" id="228923">
    <molecule id="Q9SE95-1"/>
</dbReference>
<dbReference type="EnsemblPlants" id="AT5G55000.2">
    <molecule id="Q9SE95-1"/>
    <property type="protein sequence ID" value="AT5G55000.2"/>
    <property type="gene ID" value="AT5G55000"/>
</dbReference>
<dbReference type="GeneID" id="835591"/>
<dbReference type="Gramene" id="AT5G55000.2">
    <molecule id="Q9SE95-1"/>
    <property type="protein sequence ID" value="AT5G55000.2"/>
    <property type="gene ID" value="AT5G55000"/>
</dbReference>
<dbReference type="KEGG" id="ath:AT5G55000"/>
<dbReference type="Araport" id="AT5G55000"/>
<dbReference type="TAIR" id="AT5G55000">
    <property type="gene designation" value="FIP2"/>
</dbReference>
<dbReference type="eggNOG" id="KOG1665">
    <property type="taxonomic scope" value="Eukaryota"/>
</dbReference>
<dbReference type="HOGENOM" id="CLU_043894_1_1_1"/>
<dbReference type="InParanoid" id="Q9SE95"/>
<dbReference type="OMA" id="YACIKNA"/>
<dbReference type="OrthoDB" id="2414723at2759"/>
<dbReference type="PhylomeDB" id="Q9SE95"/>
<dbReference type="UniPathway" id="UPA00143"/>
<dbReference type="PRO" id="PR:Q9SE95"/>
<dbReference type="Proteomes" id="UP000006548">
    <property type="component" value="Chromosome 5"/>
</dbReference>
<dbReference type="ExpressionAtlas" id="Q9SE95">
    <property type="expression patterns" value="baseline and differential"/>
</dbReference>
<dbReference type="GO" id="GO:0051260">
    <property type="term" value="P:protein homooligomerization"/>
    <property type="evidence" value="ECO:0007669"/>
    <property type="project" value="InterPro"/>
</dbReference>
<dbReference type="GO" id="GO:0016567">
    <property type="term" value="P:protein ubiquitination"/>
    <property type="evidence" value="ECO:0007669"/>
    <property type="project" value="UniProtKB-UniPathway"/>
</dbReference>
<dbReference type="CDD" id="cd18376">
    <property type="entry name" value="BTB_POZ_FIP2-like"/>
    <property type="match status" value="1"/>
</dbReference>
<dbReference type="Gene3D" id="2.160.20.80">
    <property type="entry name" value="E3 ubiquitin-protein ligase SopA"/>
    <property type="match status" value="2"/>
</dbReference>
<dbReference type="Gene3D" id="3.30.710.10">
    <property type="entry name" value="Potassium Channel Kv1.1, Chain A"/>
    <property type="match status" value="1"/>
</dbReference>
<dbReference type="InterPro" id="IPR001646">
    <property type="entry name" value="5peptide_repeat"/>
</dbReference>
<dbReference type="InterPro" id="IPR000210">
    <property type="entry name" value="BTB/POZ_dom"/>
</dbReference>
<dbReference type="InterPro" id="IPR051082">
    <property type="entry name" value="Pentapeptide-BTB/POZ_domain"/>
</dbReference>
<dbReference type="InterPro" id="IPR011333">
    <property type="entry name" value="SKP1/BTB/POZ_sf"/>
</dbReference>
<dbReference type="InterPro" id="IPR003131">
    <property type="entry name" value="T1-type_BTB"/>
</dbReference>
<dbReference type="PANTHER" id="PTHR14136">
    <property type="entry name" value="BTB_POZ DOMAIN-CONTAINING PROTEIN KCTD9"/>
    <property type="match status" value="1"/>
</dbReference>
<dbReference type="PANTHER" id="PTHR14136:SF17">
    <property type="entry name" value="BTB_POZ DOMAIN-CONTAINING PROTEIN KCTD9"/>
    <property type="match status" value="1"/>
</dbReference>
<dbReference type="Pfam" id="PF02214">
    <property type="entry name" value="BTB_2"/>
    <property type="match status" value="1"/>
</dbReference>
<dbReference type="Pfam" id="PF00805">
    <property type="entry name" value="Pentapeptide"/>
    <property type="match status" value="2"/>
</dbReference>
<dbReference type="Pfam" id="PF13599">
    <property type="entry name" value="Pentapeptide_4"/>
    <property type="match status" value="1"/>
</dbReference>
<dbReference type="SMART" id="SM00225">
    <property type="entry name" value="BTB"/>
    <property type="match status" value="1"/>
</dbReference>
<dbReference type="SUPFAM" id="SSF141571">
    <property type="entry name" value="Pentapeptide repeat-like"/>
    <property type="match status" value="1"/>
</dbReference>
<dbReference type="SUPFAM" id="SSF54695">
    <property type="entry name" value="POZ domain"/>
    <property type="match status" value="1"/>
</dbReference>
<comment type="function">
    <text evidence="1">May act as a substrate-specific adapter of an E3 ubiquitin-protein ligase complex (CUL3-RBX1-BTB) which mediates the ubiquitination and subsequent proteasomal degradation of target proteins.</text>
</comment>
<comment type="pathway">
    <text>Protein modification; protein ubiquitination.</text>
</comment>
<comment type="subunit">
    <text evidence="2">Interacts with FH1.</text>
</comment>
<comment type="alternative products">
    <event type="alternative splicing"/>
    <isoform>
        <id>Q9SE95-1</id>
        <name>1</name>
        <sequence type="displayed"/>
    </isoform>
    <text>A number of isoforms are produced. According to EST sequences.</text>
</comment>
<comment type="tissue specificity">
    <text evidence="2">Expressed in all tissues but preferentially in roots and flowers.</text>
</comment>
<comment type="domain">
    <text evidence="3">The BTB/POZ domain mediates the interaction with some component of ubiquitin ligase complexes.</text>
</comment>
<organism>
    <name type="scientific">Arabidopsis thaliana</name>
    <name type="common">Mouse-ear cress</name>
    <dbReference type="NCBI Taxonomy" id="3702"/>
    <lineage>
        <taxon>Eukaryota</taxon>
        <taxon>Viridiplantae</taxon>
        <taxon>Streptophyta</taxon>
        <taxon>Embryophyta</taxon>
        <taxon>Tracheophyta</taxon>
        <taxon>Spermatophyta</taxon>
        <taxon>Magnoliopsida</taxon>
        <taxon>eudicotyledons</taxon>
        <taxon>Gunneridae</taxon>
        <taxon>Pentapetalae</taxon>
        <taxon>rosids</taxon>
        <taxon>malvids</taxon>
        <taxon>Brassicales</taxon>
        <taxon>Brassicaceae</taxon>
        <taxon>Camelineae</taxon>
        <taxon>Arabidopsis</taxon>
    </lineage>
</organism>